<organism>
    <name type="scientific">Geobacter sulfurreducens (strain ATCC 51573 / DSM 12127 / PCA)</name>
    <dbReference type="NCBI Taxonomy" id="243231"/>
    <lineage>
        <taxon>Bacteria</taxon>
        <taxon>Pseudomonadati</taxon>
        <taxon>Thermodesulfobacteriota</taxon>
        <taxon>Desulfuromonadia</taxon>
        <taxon>Geobacterales</taxon>
        <taxon>Geobacteraceae</taxon>
        <taxon>Geobacter</taxon>
    </lineage>
</organism>
<protein>
    <recommendedName>
        <fullName evidence="1">Heat-inducible transcription repressor HrcA</fullName>
    </recommendedName>
</protein>
<feature type="chain" id="PRO_0000182481" description="Heat-inducible transcription repressor HrcA">
    <location>
        <begin position="1"/>
        <end position="342"/>
    </location>
</feature>
<name>HRCA_GEOSL</name>
<sequence length="342" mass="38374">MTDISERNKLILEAIIEDYITTAEPVGSRAVTKRHGLTLSPATVRNVMADLEEMGYLVSPHTSAGRVPTDKAYRLYVDSLLAVRRIDKVERERIRKRYAEAGRDIGAVLHETSRLLSSVSHYTGIVLAPRFSATIFRHIEFVKLGGRRILVILVADNGTVQNRLIESDEEFSSEELIRMSNYLNELLVGVPVGQVRTRILEEMRNEKVLYDKLLARALQLSEQSLNDDGAQIFIEGQTNILEQPEFADSRRMRDLFRAFEEKNQLVGLLDRCLNAQGVQIFIGAETHLSQMEGLSIITSTYLTGKNTLGVLGVIGPTRMGYAKVIPIVDYTAKLVSRLLEGE</sequence>
<comment type="function">
    <text evidence="1">Negative regulator of class I heat shock genes (grpE-dnaK-dnaJ and groELS operons). Prevents heat-shock induction of these operons.</text>
</comment>
<comment type="similarity">
    <text evidence="1">Belongs to the HrcA family.</text>
</comment>
<evidence type="ECO:0000255" key="1">
    <source>
        <dbReference type="HAMAP-Rule" id="MF_00081"/>
    </source>
</evidence>
<accession>Q74H61</accession>
<gene>
    <name evidence="1" type="primary">hrcA</name>
    <name type="ordered locus">GSU0031</name>
</gene>
<reference key="1">
    <citation type="journal article" date="2003" name="Science">
        <title>Genome of Geobacter sulfurreducens: metal reduction in subsurface environments.</title>
        <authorList>
            <person name="Methe B.A."/>
            <person name="Nelson K.E."/>
            <person name="Eisen J.A."/>
            <person name="Paulsen I.T."/>
            <person name="Nelson W.C."/>
            <person name="Heidelberg J.F."/>
            <person name="Wu D."/>
            <person name="Wu M."/>
            <person name="Ward N.L."/>
            <person name="Beanan M.J."/>
            <person name="Dodson R.J."/>
            <person name="Madupu R."/>
            <person name="Brinkac L.M."/>
            <person name="Daugherty S.C."/>
            <person name="DeBoy R.T."/>
            <person name="Durkin A.S."/>
            <person name="Gwinn M.L."/>
            <person name="Kolonay J.F."/>
            <person name="Sullivan S.A."/>
            <person name="Haft D.H."/>
            <person name="Selengut J."/>
            <person name="Davidsen T.M."/>
            <person name="Zafar N."/>
            <person name="White O."/>
            <person name="Tran B."/>
            <person name="Romero C."/>
            <person name="Forberger H.A."/>
            <person name="Weidman J.F."/>
            <person name="Khouri H.M."/>
            <person name="Feldblyum T.V."/>
            <person name="Utterback T.R."/>
            <person name="Van Aken S.E."/>
            <person name="Lovley D.R."/>
            <person name="Fraser C.M."/>
        </authorList>
    </citation>
    <scope>NUCLEOTIDE SEQUENCE [LARGE SCALE GENOMIC DNA]</scope>
    <source>
        <strain>ATCC 51573 / DSM 12127 / PCA</strain>
    </source>
</reference>
<proteinExistence type="inferred from homology"/>
<dbReference type="EMBL" id="AE017180">
    <property type="protein sequence ID" value="AAR33366.1"/>
    <property type="molecule type" value="Genomic_DNA"/>
</dbReference>
<dbReference type="RefSeq" id="NP_951093.1">
    <property type="nucleotide sequence ID" value="NC_002939.5"/>
</dbReference>
<dbReference type="RefSeq" id="WP_010940709.1">
    <property type="nucleotide sequence ID" value="NC_002939.5"/>
</dbReference>
<dbReference type="SMR" id="Q74H61"/>
<dbReference type="STRING" id="243231.GSU0031"/>
<dbReference type="DNASU" id="2685607"/>
<dbReference type="EnsemblBacteria" id="AAR33366">
    <property type="protein sequence ID" value="AAR33366"/>
    <property type="gene ID" value="GSU0031"/>
</dbReference>
<dbReference type="KEGG" id="gsu:GSU0031"/>
<dbReference type="PATRIC" id="fig|243231.5.peg.32"/>
<dbReference type="eggNOG" id="COG1420">
    <property type="taxonomic scope" value="Bacteria"/>
</dbReference>
<dbReference type="HOGENOM" id="CLU_050019_1_0_7"/>
<dbReference type="InParanoid" id="Q74H61"/>
<dbReference type="OrthoDB" id="9783139at2"/>
<dbReference type="Proteomes" id="UP000000577">
    <property type="component" value="Chromosome"/>
</dbReference>
<dbReference type="GO" id="GO:0003677">
    <property type="term" value="F:DNA binding"/>
    <property type="evidence" value="ECO:0007669"/>
    <property type="project" value="InterPro"/>
</dbReference>
<dbReference type="GO" id="GO:0045892">
    <property type="term" value="P:negative regulation of DNA-templated transcription"/>
    <property type="evidence" value="ECO:0000318"/>
    <property type="project" value="GO_Central"/>
</dbReference>
<dbReference type="FunFam" id="1.10.10.10:FF:000049">
    <property type="entry name" value="Heat-inducible transcription repressor HrcA"/>
    <property type="match status" value="1"/>
</dbReference>
<dbReference type="Gene3D" id="3.30.450.40">
    <property type="match status" value="1"/>
</dbReference>
<dbReference type="Gene3D" id="3.30.390.60">
    <property type="entry name" value="Heat-inducible transcription repressor hrca homolog, domain 3"/>
    <property type="match status" value="1"/>
</dbReference>
<dbReference type="Gene3D" id="1.10.10.10">
    <property type="entry name" value="Winged helix-like DNA-binding domain superfamily/Winged helix DNA-binding domain"/>
    <property type="match status" value="1"/>
</dbReference>
<dbReference type="HAMAP" id="MF_00081">
    <property type="entry name" value="HrcA"/>
    <property type="match status" value="1"/>
</dbReference>
<dbReference type="InterPro" id="IPR029016">
    <property type="entry name" value="GAF-like_dom_sf"/>
</dbReference>
<dbReference type="InterPro" id="IPR002571">
    <property type="entry name" value="HrcA"/>
</dbReference>
<dbReference type="InterPro" id="IPR021153">
    <property type="entry name" value="HrcA_C"/>
</dbReference>
<dbReference type="InterPro" id="IPR036388">
    <property type="entry name" value="WH-like_DNA-bd_sf"/>
</dbReference>
<dbReference type="InterPro" id="IPR036390">
    <property type="entry name" value="WH_DNA-bd_sf"/>
</dbReference>
<dbReference type="InterPro" id="IPR005104">
    <property type="entry name" value="WHTH_HrcA_DNA-bd"/>
</dbReference>
<dbReference type="InterPro" id="IPR023120">
    <property type="entry name" value="WHTH_transcript_rep_HrcA_IDD"/>
</dbReference>
<dbReference type="NCBIfam" id="TIGR00331">
    <property type="entry name" value="hrcA"/>
    <property type="match status" value="1"/>
</dbReference>
<dbReference type="PANTHER" id="PTHR34824">
    <property type="entry name" value="HEAT-INDUCIBLE TRANSCRIPTION REPRESSOR HRCA"/>
    <property type="match status" value="1"/>
</dbReference>
<dbReference type="PANTHER" id="PTHR34824:SF1">
    <property type="entry name" value="HEAT-INDUCIBLE TRANSCRIPTION REPRESSOR HRCA"/>
    <property type="match status" value="1"/>
</dbReference>
<dbReference type="Pfam" id="PF01628">
    <property type="entry name" value="HrcA"/>
    <property type="match status" value="1"/>
</dbReference>
<dbReference type="Pfam" id="PF03444">
    <property type="entry name" value="HrcA_DNA-bdg"/>
    <property type="match status" value="1"/>
</dbReference>
<dbReference type="PIRSF" id="PIRSF005485">
    <property type="entry name" value="HrcA"/>
    <property type="match status" value="1"/>
</dbReference>
<dbReference type="SUPFAM" id="SSF55781">
    <property type="entry name" value="GAF domain-like"/>
    <property type="match status" value="1"/>
</dbReference>
<dbReference type="SUPFAM" id="SSF46785">
    <property type="entry name" value="Winged helix' DNA-binding domain"/>
    <property type="match status" value="1"/>
</dbReference>
<keyword id="KW-1185">Reference proteome</keyword>
<keyword id="KW-0678">Repressor</keyword>
<keyword id="KW-0346">Stress response</keyword>
<keyword id="KW-0804">Transcription</keyword>
<keyword id="KW-0805">Transcription regulation</keyword>